<dbReference type="EC" id="6.3.4.4" evidence="1"/>
<dbReference type="EMBL" id="CP000746">
    <property type="protein sequence ID" value="ABR75181.1"/>
    <property type="molecule type" value="Genomic_DNA"/>
</dbReference>
<dbReference type="RefSeq" id="WP_012073558.1">
    <property type="nucleotide sequence ID" value="NC_009655.1"/>
</dbReference>
<dbReference type="SMR" id="A6VQD4"/>
<dbReference type="STRING" id="339671.Asuc_1830"/>
<dbReference type="KEGG" id="asu:Asuc_1830"/>
<dbReference type="eggNOG" id="COG0104">
    <property type="taxonomic scope" value="Bacteria"/>
</dbReference>
<dbReference type="HOGENOM" id="CLU_029848_0_0_6"/>
<dbReference type="OrthoDB" id="9807553at2"/>
<dbReference type="UniPathway" id="UPA00075">
    <property type="reaction ID" value="UER00335"/>
</dbReference>
<dbReference type="Proteomes" id="UP000001114">
    <property type="component" value="Chromosome"/>
</dbReference>
<dbReference type="GO" id="GO:0005737">
    <property type="term" value="C:cytoplasm"/>
    <property type="evidence" value="ECO:0007669"/>
    <property type="project" value="UniProtKB-SubCell"/>
</dbReference>
<dbReference type="GO" id="GO:0004019">
    <property type="term" value="F:adenylosuccinate synthase activity"/>
    <property type="evidence" value="ECO:0007669"/>
    <property type="project" value="UniProtKB-UniRule"/>
</dbReference>
<dbReference type="GO" id="GO:0005525">
    <property type="term" value="F:GTP binding"/>
    <property type="evidence" value="ECO:0007669"/>
    <property type="project" value="UniProtKB-UniRule"/>
</dbReference>
<dbReference type="GO" id="GO:0000287">
    <property type="term" value="F:magnesium ion binding"/>
    <property type="evidence" value="ECO:0007669"/>
    <property type="project" value="UniProtKB-UniRule"/>
</dbReference>
<dbReference type="GO" id="GO:0044208">
    <property type="term" value="P:'de novo' AMP biosynthetic process"/>
    <property type="evidence" value="ECO:0007669"/>
    <property type="project" value="UniProtKB-UniRule"/>
</dbReference>
<dbReference type="GO" id="GO:0046040">
    <property type="term" value="P:IMP metabolic process"/>
    <property type="evidence" value="ECO:0007669"/>
    <property type="project" value="TreeGrafter"/>
</dbReference>
<dbReference type="CDD" id="cd03108">
    <property type="entry name" value="AdSS"/>
    <property type="match status" value="1"/>
</dbReference>
<dbReference type="FunFam" id="1.10.300.10:FF:000001">
    <property type="entry name" value="Adenylosuccinate synthetase"/>
    <property type="match status" value="1"/>
</dbReference>
<dbReference type="FunFam" id="3.90.170.10:FF:000001">
    <property type="entry name" value="Adenylosuccinate synthetase"/>
    <property type="match status" value="1"/>
</dbReference>
<dbReference type="Gene3D" id="3.40.440.10">
    <property type="entry name" value="Adenylosuccinate Synthetase, subunit A, domain 1"/>
    <property type="match status" value="1"/>
</dbReference>
<dbReference type="Gene3D" id="1.10.300.10">
    <property type="entry name" value="Adenylosuccinate Synthetase, subunit A, domain 2"/>
    <property type="match status" value="1"/>
</dbReference>
<dbReference type="Gene3D" id="3.90.170.10">
    <property type="entry name" value="Adenylosuccinate Synthetase, subunit A, domain 3"/>
    <property type="match status" value="1"/>
</dbReference>
<dbReference type="HAMAP" id="MF_00011">
    <property type="entry name" value="Adenylosucc_synth"/>
    <property type="match status" value="1"/>
</dbReference>
<dbReference type="InterPro" id="IPR018220">
    <property type="entry name" value="Adenylosuccin_syn_GTP-bd"/>
</dbReference>
<dbReference type="InterPro" id="IPR033128">
    <property type="entry name" value="Adenylosuccin_syn_Lys_AS"/>
</dbReference>
<dbReference type="InterPro" id="IPR042109">
    <property type="entry name" value="Adenylosuccinate_synth_dom1"/>
</dbReference>
<dbReference type="InterPro" id="IPR042110">
    <property type="entry name" value="Adenylosuccinate_synth_dom2"/>
</dbReference>
<dbReference type="InterPro" id="IPR042111">
    <property type="entry name" value="Adenylosuccinate_synth_dom3"/>
</dbReference>
<dbReference type="InterPro" id="IPR001114">
    <property type="entry name" value="Adenylosuccinate_synthetase"/>
</dbReference>
<dbReference type="InterPro" id="IPR027417">
    <property type="entry name" value="P-loop_NTPase"/>
</dbReference>
<dbReference type="NCBIfam" id="NF002223">
    <property type="entry name" value="PRK01117.1"/>
    <property type="match status" value="1"/>
</dbReference>
<dbReference type="NCBIfam" id="TIGR00184">
    <property type="entry name" value="purA"/>
    <property type="match status" value="1"/>
</dbReference>
<dbReference type="PANTHER" id="PTHR11846">
    <property type="entry name" value="ADENYLOSUCCINATE SYNTHETASE"/>
    <property type="match status" value="1"/>
</dbReference>
<dbReference type="PANTHER" id="PTHR11846:SF0">
    <property type="entry name" value="ADENYLOSUCCINATE SYNTHETASE"/>
    <property type="match status" value="1"/>
</dbReference>
<dbReference type="Pfam" id="PF00709">
    <property type="entry name" value="Adenylsucc_synt"/>
    <property type="match status" value="1"/>
</dbReference>
<dbReference type="SMART" id="SM00788">
    <property type="entry name" value="Adenylsucc_synt"/>
    <property type="match status" value="1"/>
</dbReference>
<dbReference type="SUPFAM" id="SSF52540">
    <property type="entry name" value="P-loop containing nucleoside triphosphate hydrolases"/>
    <property type="match status" value="1"/>
</dbReference>
<dbReference type="PROSITE" id="PS01266">
    <property type="entry name" value="ADENYLOSUCCIN_SYN_1"/>
    <property type="match status" value="1"/>
</dbReference>
<dbReference type="PROSITE" id="PS00513">
    <property type="entry name" value="ADENYLOSUCCIN_SYN_2"/>
    <property type="match status" value="1"/>
</dbReference>
<name>PURA_ACTSZ</name>
<gene>
    <name evidence="1" type="primary">purA</name>
    <name type="ordered locus">Asuc_1830</name>
</gene>
<comment type="function">
    <text evidence="1">Plays an important role in the de novo pathway of purine nucleotide biosynthesis. Catalyzes the first committed step in the biosynthesis of AMP from IMP.</text>
</comment>
<comment type="catalytic activity">
    <reaction evidence="1">
        <text>IMP + L-aspartate + GTP = N(6)-(1,2-dicarboxyethyl)-AMP + GDP + phosphate + 2 H(+)</text>
        <dbReference type="Rhea" id="RHEA:15753"/>
        <dbReference type="ChEBI" id="CHEBI:15378"/>
        <dbReference type="ChEBI" id="CHEBI:29991"/>
        <dbReference type="ChEBI" id="CHEBI:37565"/>
        <dbReference type="ChEBI" id="CHEBI:43474"/>
        <dbReference type="ChEBI" id="CHEBI:57567"/>
        <dbReference type="ChEBI" id="CHEBI:58053"/>
        <dbReference type="ChEBI" id="CHEBI:58189"/>
        <dbReference type="EC" id="6.3.4.4"/>
    </reaction>
</comment>
<comment type="cofactor">
    <cofactor evidence="1">
        <name>Mg(2+)</name>
        <dbReference type="ChEBI" id="CHEBI:18420"/>
    </cofactor>
    <text evidence="1">Binds 1 Mg(2+) ion per subunit.</text>
</comment>
<comment type="pathway">
    <text evidence="1">Purine metabolism; AMP biosynthesis via de novo pathway; AMP from IMP: step 1/2.</text>
</comment>
<comment type="subunit">
    <text evidence="1">Homodimer.</text>
</comment>
<comment type="subcellular location">
    <subcellularLocation>
        <location evidence="1">Cytoplasm</location>
    </subcellularLocation>
</comment>
<comment type="similarity">
    <text evidence="1">Belongs to the adenylosuccinate synthetase family.</text>
</comment>
<sequence length="432" mass="47047">MGKSVVVLGAQWGDEGKGKIVDLLTDRVKYVVRYQGGHNAGHTLIINGEKTVLRLIPSGILHNNVTCLIGNGVVLSPSALMQEMGELESRGINVRERLLISEACPLIMPYHVAMDHAREAALGNNKIGTTGRGIGPAYEDKVARRGLRVSDLFNKEKFAAKLKNVLDYYNFQLVQYYKAEPVDYQKTLDDVMAIADIILGMVADISTILDTARKNGDNILFEGAQGAMLDIDHGTYPFVTSSNTTAGGVATGAGFGPRNIDYVLGIIKAYCTRVGGGPFTTELFDETGAEIARKGNEFGAVTGRPRRCGWFDAVAIRRAIQVNSISGFCMTKLDVLDGFDEVKICVGYKLPSGEVVDYAPLSAKDWEGVEPVYESMPGWKENTFGVTDYNKLPAAVHNYVKRIEQVTGVPVAILSTGPDRVETMILQDPFKQ</sequence>
<reference key="1">
    <citation type="journal article" date="2010" name="BMC Genomics">
        <title>A genomic perspective on the potential of Actinobacillus succinogenes for industrial succinate production.</title>
        <authorList>
            <person name="McKinlay J.B."/>
            <person name="Laivenieks M."/>
            <person name="Schindler B.D."/>
            <person name="McKinlay A.A."/>
            <person name="Siddaramappa S."/>
            <person name="Challacombe J.F."/>
            <person name="Lowry S.R."/>
            <person name="Clum A."/>
            <person name="Lapidus A.L."/>
            <person name="Burkhart K.B."/>
            <person name="Harkins V."/>
            <person name="Vieille C."/>
        </authorList>
    </citation>
    <scope>NUCLEOTIDE SEQUENCE [LARGE SCALE GENOMIC DNA]</scope>
    <source>
        <strain>ATCC 55618 / DSM 22257 / CCUG 43843 / 130Z</strain>
    </source>
</reference>
<keyword id="KW-0963">Cytoplasm</keyword>
<keyword id="KW-0342">GTP-binding</keyword>
<keyword id="KW-0436">Ligase</keyword>
<keyword id="KW-0460">Magnesium</keyword>
<keyword id="KW-0479">Metal-binding</keyword>
<keyword id="KW-0547">Nucleotide-binding</keyword>
<keyword id="KW-0658">Purine biosynthesis</keyword>
<keyword id="KW-1185">Reference proteome</keyword>
<evidence type="ECO:0000255" key="1">
    <source>
        <dbReference type="HAMAP-Rule" id="MF_00011"/>
    </source>
</evidence>
<feature type="chain" id="PRO_1000070937" description="Adenylosuccinate synthetase">
    <location>
        <begin position="1"/>
        <end position="432"/>
    </location>
</feature>
<feature type="active site" description="Proton acceptor" evidence="1">
    <location>
        <position position="14"/>
    </location>
</feature>
<feature type="active site" description="Proton donor" evidence="1">
    <location>
        <position position="42"/>
    </location>
</feature>
<feature type="binding site" evidence="1">
    <location>
        <begin position="13"/>
        <end position="19"/>
    </location>
    <ligand>
        <name>GTP</name>
        <dbReference type="ChEBI" id="CHEBI:37565"/>
    </ligand>
</feature>
<feature type="binding site" description="in other chain" evidence="1">
    <location>
        <begin position="14"/>
        <end position="17"/>
    </location>
    <ligand>
        <name>IMP</name>
        <dbReference type="ChEBI" id="CHEBI:58053"/>
        <note>ligand shared between dimeric partners</note>
    </ligand>
</feature>
<feature type="binding site" evidence="1">
    <location>
        <position position="14"/>
    </location>
    <ligand>
        <name>Mg(2+)</name>
        <dbReference type="ChEBI" id="CHEBI:18420"/>
    </ligand>
</feature>
<feature type="binding site" description="in other chain" evidence="1">
    <location>
        <begin position="39"/>
        <end position="42"/>
    </location>
    <ligand>
        <name>IMP</name>
        <dbReference type="ChEBI" id="CHEBI:58053"/>
        <note>ligand shared between dimeric partners</note>
    </ligand>
</feature>
<feature type="binding site" evidence="1">
    <location>
        <begin position="41"/>
        <end position="43"/>
    </location>
    <ligand>
        <name>GTP</name>
        <dbReference type="ChEBI" id="CHEBI:37565"/>
    </ligand>
</feature>
<feature type="binding site" evidence="1">
    <location>
        <position position="41"/>
    </location>
    <ligand>
        <name>Mg(2+)</name>
        <dbReference type="ChEBI" id="CHEBI:18420"/>
    </ligand>
</feature>
<feature type="binding site" description="in other chain" evidence="1">
    <location>
        <position position="130"/>
    </location>
    <ligand>
        <name>IMP</name>
        <dbReference type="ChEBI" id="CHEBI:58053"/>
        <note>ligand shared between dimeric partners</note>
    </ligand>
</feature>
<feature type="binding site" evidence="1">
    <location>
        <position position="144"/>
    </location>
    <ligand>
        <name>IMP</name>
        <dbReference type="ChEBI" id="CHEBI:58053"/>
        <note>ligand shared between dimeric partners</note>
    </ligand>
</feature>
<feature type="binding site" description="in other chain" evidence="1">
    <location>
        <position position="225"/>
    </location>
    <ligand>
        <name>IMP</name>
        <dbReference type="ChEBI" id="CHEBI:58053"/>
        <note>ligand shared between dimeric partners</note>
    </ligand>
</feature>
<feature type="binding site" description="in other chain" evidence="1">
    <location>
        <position position="240"/>
    </location>
    <ligand>
        <name>IMP</name>
        <dbReference type="ChEBI" id="CHEBI:58053"/>
        <note>ligand shared between dimeric partners</note>
    </ligand>
</feature>
<feature type="binding site" evidence="1">
    <location>
        <begin position="300"/>
        <end position="306"/>
    </location>
    <ligand>
        <name>substrate</name>
    </ligand>
</feature>
<feature type="binding site" description="in other chain" evidence="1">
    <location>
        <position position="304"/>
    </location>
    <ligand>
        <name>IMP</name>
        <dbReference type="ChEBI" id="CHEBI:58053"/>
        <note>ligand shared between dimeric partners</note>
    </ligand>
</feature>
<feature type="binding site" evidence="1">
    <location>
        <position position="306"/>
    </location>
    <ligand>
        <name>GTP</name>
        <dbReference type="ChEBI" id="CHEBI:37565"/>
    </ligand>
</feature>
<feature type="binding site" evidence="1">
    <location>
        <begin position="332"/>
        <end position="334"/>
    </location>
    <ligand>
        <name>GTP</name>
        <dbReference type="ChEBI" id="CHEBI:37565"/>
    </ligand>
</feature>
<feature type="binding site" evidence="1">
    <location>
        <begin position="415"/>
        <end position="417"/>
    </location>
    <ligand>
        <name>GTP</name>
        <dbReference type="ChEBI" id="CHEBI:37565"/>
    </ligand>
</feature>
<proteinExistence type="inferred from homology"/>
<protein>
    <recommendedName>
        <fullName evidence="1">Adenylosuccinate synthetase</fullName>
        <shortName evidence="1">AMPSase</shortName>
        <shortName evidence="1">AdSS</shortName>
        <ecNumber evidence="1">6.3.4.4</ecNumber>
    </recommendedName>
    <alternativeName>
        <fullName evidence="1">IMP--aspartate ligase</fullName>
    </alternativeName>
</protein>
<organism>
    <name type="scientific">Actinobacillus succinogenes (strain ATCC 55618 / DSM 22257 / CCUG 43843 / 130Z)</name>
    <dbReference type="NCBI Taxonomy" id="339671"/>
    <lineage>
        <taxon>Bacteria</taxon>
        <taxon>Pseudomonadati</taxon>
        <taxon>Pseudomonadota</taxon>
        <taxon>Gammaproteobacteria</taxon>
        <taxon>Pasteurellales</taxon>
        <taxon>Pasteurellaceae</taxon>
        <taxon>Actinobacillus</taxon>
    </lineage>
</organism>
<accession>A6VQD4</accession>